<gene>
    <name evidence="1" type="primary">lipB</name>
    <name type="ordered locus">LBJ_1236</name>
</gene>
<evidence type="ECO:0000255" key="1">
    <source>
        <dbReference type="HAMAP-Rule" id="MF_00013"/>
    </source>
</evidence>
<evidence type="ECO:0000255" key="2">
    <source>
        <dbReference type="PROSITE-ProRule" id="PRU01067"/>
    </source>
</evidence>
<feature type="chain" id="PRO_1000089462" description="Octanoyltransferase">
    <location>
        <begin position="1"/>
        <end position="219"/>
    </location>
</feature>
<feature type="domain" description="BPL/LPL catalytic" evidence="2">
    <location>
        <begin position="24"/>
        <end position="212"/>
    </location>
</feature>
<feature type="active site" description="Acyl-thioester intermediate" evidence="1">
    <location>
        <position position="171"/>
    </location>
</feature>
<feature type="binding site" evidence="1">
    <location>
        <begin position="69"/>
        <end position="76"/>
    </location>
    <ligand>
        <name>substrate</name>
    </ligand>
</feature>
<feature type="binding site" evidence="1">
    <location>
        <begin position="140"/>
        <end position="142"/>
    </location>
    <ligand>
        <name>substrate</name>
    </ligand>
</feature>
<feature type="binding site" evidence="1">
    <location>
        <begin position="153"/>
        <end position="155"/>
    </location>
    <ligand>
        <name>substrate</name>
    </ligand>
</feature>
<feature type="site" description="Lowers pKa of active site Cys" evidence="1">
    <location>
        <position position="137"/>
    </location>
</feature>
<protein>
    <recommendedName>
        <fullName evidence="1">Octanoyltransferase</fullName>
        <ecNumber evidence="1">2.3.1.181</ecNumber>
    </recommendedName>
    <alternativeName>
        <fullName evidence="1">Lipoate-protein ligase B</fullName>
    </alternativeName>
    <alternativeName>
        <fullName evidence="1">Lipoyl/octanoyl transferase</fullName>
    </alternativeName>
    <alternativeName>
        <fullName evidence="1">Octanoyl-[acyl-carrier-protein]-protein N-octanoyltransferase</fullName>
    </alternativeName>
</protein>
<keyword id="KW-0012">Acyltransferase</keyword>
<keyword id="KW-0963">Cytoplasm</keyword>
<keyword id="KW-0808">Transferase</keyword>
<organism>
    <name type="scientific">Leptospira borgpetersenii serovar Hardjo-bovis (strain JB197)</name>
    <dbReference type="NCBI Taxonomy" id="355277"/>
    <lineage>
        <taxon>Bacteria</taxon>
        <taxon>Pseudomonadati</taxon>
        <taxon>Spirochaetota</taxon>
        <taxon>Spirochaetia</taxon>
        <taxon>Leptospirales</taxon>
        <taxon>Leptospiraceae</taxon>
        <taxon>Leptospira</taxon>
    </lineage>
</organism>
<accession>Q04TD5</accession>
<name>LIPB_LEPBJ</name>
<sequence>MRMIRFRKKIPYLRYLEMQEKLRKFRRECILFLEHAPIITGGINYNPENLLLGKEFLESQGIQVHFVQRGGDFTAHEPGQLVIYPHVDLKKRNLPIRFYLENLLQSVIDSARTTWGLNLITDSDSPGLYLESNSSKKICSIGVNFKSFFTSHGVAFNLNNDFTAFRCINPCGRNWTDMTSVEKLGLDSGFAKRNQFISFMKANLNSFLGPISKLTHTVI</sequence>
<comment type="function">
    <text evidence="1">Catalyzes the transfer of endogenously produced octanoic acid from octanoyl-acyl-carrier-protein onto the lipoyl domains of lipoate-dependent enzymes. Lipoyl-ACP can also act as a substrate although octanoyl-ACP is likely to be the physiological substrate.</text>
</comment>
<comment type="catalytic activity">
    <reaction evidence="1">
        <text>octanoyl-[ACP] + L-lysyl-[protein] = N(6)-octanoyl-L-lysyl-[protein] + holo-[ACP] + H(+)</text>
        <dbReference type="Rhea" id="RHEA:17665"/>
        <dbReference type="Rhea" id="RHEA-COMP:9636"/>
        <dbReference type="Rhea" id="RHEA-COMP:9685"/>
        <dbReference type="Rhea" id="RHEA-COMP:9752"/>
        <dbReference type="Rhea" id="RHEA-COMP:9928"/>
        <dbReference type="ChEBI" id="CHEBI:15378"/>
        <dbReference type="ChEBI" id="CHEBI:29969"/>
        <dbReference type="ChEBI" id="CHEBI:64479"/>
        <dbReference type="ChEBI" id="CHEBI:78463"/>
        <dbReference type="ChEBI" id="CHEBI:78809"/>
        <dbReference type="EC" id="2.3.1.181"/>
    </reaction>
</comment>
<comment type="pathway">
    <text evidence="1">Protein modification; protein lipoylation via endogenous pathway; protein N(6)-(lipoyl)lysine from octanoyl-[acyl-carrier-protein]: step 1/2.</text>
</comment>
<comment type="subcellular location">
    <subcellularLocation>
        <location evidence="1">Cytoplasm</location>
    </subcellularLocation>
</comment>
<comment type="miscellaneous">
    <text evidence="1">In the reaction, the free carboxyl group of octanoic acid is attached via an amide linkage to the epsilon-amino group of a specific lysine residue of lipoyl domains of lipoate-dependent enzymes.</text>
</comment>
<comment type="similarity">
    <text evidence="1">Belongs to the LipB family.</text>
</comment>
<dbReference type="EC" id="2.3.1.181" evidence="1"/>
<dbReference type="EMBL" id="CP000350">
    <property type="protein sequence ID" value="ABJ75835.1"/>
    <property type="molecule type" value="Genomic_DNA"/>
</dbReference>
<dbReference type="SMR" id="Q04TD5"/>
<dbReference type="KEGG" id="lbj:LBJ_1236"/>
<dbReference type="HOGENOM" id="CLU_035168_1_3_12"/>
<dbReference type="UniPathway" id="UPA00538">
    <property type="reaction ID" value="UER00592"/>
</dbReference>
<dbReference type="Proteomes" id="UP000000656">
    <property type="component" value="Chromosome 1"/>
</dbReference>
<dbReference type="GO" id="GO:0005737">
    <property type="term" value="C:cytoplasm"/>
    <property type="evidence" value="ECO:0007669"/>
    <property type="project" value="UniProtKB-SubCell"/>
</dbReference>
<dbReference type="GO" id="GO:0033819">
    <property type="term" value="F:lipoyl(octanoyl) transferase activity"/>
    <property type="evidence" value="ECO:0007669"/>
    <property type="project" value="UniProtKB-EC"/>
</dbReference>
<dbReference type="GO" id="GO:0036211">
    <property type="term" value="P:protein modification process"/>
    <property type="evidence" value="ECO:0007669"/>
    <property type="project" value="InterPro"/>
</dbReference>
<dbReference type="CDD" id="cd16444">
    <property type="entry name" value="LipB"/>
    <property type="match status" value="1"/>
</dbReference>
<dbReference type="Gene3D" id="3.30.930.10">
    <property type="entry name" value="Bira Bifunctional Protein, Domain 2"/>
    <property type="match status" value="1"/>
</dbReference>
<dbReference type="HAMAP" id="MF_00013">
    <property type="entry name" value="LipB"/>
    <property type="match status" value="1"/>
</dbReference>
<dbReference type="InterPro" id="IPR045864">
    <property type="entry name" value="aa-tRNA-synth_II/BPL/LPL"/>
</dbReference>
<dbReference type="InterPro" id="IPR004143">
    <property type="entry name" value="BPL_LPL_catalytic"/>
</dbReference>
<dbReference type="InterPro" id="IPR000544">
    <property type="entry name" value="Octanoyltransferase"/>
</dbReference>
<dbReference type="InterPro" id="IPR020605">
    <property type="entry name" value="Octanoyltransferase_CS"/>
</dbReference>
<dbReference type="NCBIfam" id="TIGR00214">
    <property type="entry name" value="lipB"/>
    <property type="match status" value="1"/>
</dbReference>
<dbReference type="PANTHER" id="PTHR10993:SF7">
    <property type="entry name" value="LIPOYLTRANSFERASE 2, MITOCHONDRIAL-RELATED"/>
    <property type="match status" value="1"/>
</dbReference>
<dbReference type="PANTHER" id="PTHR10993">
    <property type="entry name" value="OCTANOYLTRANSFERASE"/>
    <property type="match status" value="1"/>
</dbReference>
<dbReference type="Pfam" id="PF21948">
    <property type="entry name" value="LplA-B_cat"/>
    <property type="match status" value="1"/>
</dbReference>
<dbReference type="PIRSF" id="PIRSF016262">
    <property type="entry name" value="LPLase"/>
    <property type="match status" value="1"/>
</dbReference>
<dbReference type="SUPFAM" id="SSF55681">
    <property type="entry name" value="Class II aaRS and biotin synthetases"/>
    <property type="match status" value="1"/>
</dbReference>
<dbReference type="PROSITE" id="PS51733">
    <property type="entry name" value="BPL_LPL_CATALYTIC"/>
    <property type="match status" value="1"/>
</dbReference>
<dbReference type="PROSITE" id="PS01313">
    <property type="entry name" value="LIPB"/>
    <property type="match status" value="1"/>
</dbReference>
<proteinExistence type="inferred from homology"/>
<reference key="1">
    <citation type="journal article" date="2006" name="Proc. Natl. Acad. Sci. U.S.A.">
        <title>Genome reduction in Leptospira borgpetersenii reflects limited transmission potential.</title>
        <authorList>
            <person name="Bulach D.M."/>
            <person name="Zuerner R.L."/>
            <person name="Wilson P."/>
            <person name="Seemann T."/>
            <person name="McGrath A."/>
            <person name="Cullen P.A."/>
            <person name="Davis J."/>
            <person name="Johnson M."/>
            <person name="Kuczek E."/>
            <person name="Alt D.P."/>
            <person name="Peterson-Burch B."/>
            <person name="Coppel R.L."/>
            <person name="Rood J.I."/>
            <person name="Davies J.K."/>
            <person name="Adler B."/>
        </authorList>
    </citation>
    <scope>NUCLEOTIDE SEQUENCE [LARGE SCALE GENOMIC DNA]</scope>
    <source>
        <strain>JB197</strain>
    </source>
</reference>